<keyword id="KW-0030">Aminoacyl-tRNA synthetase</keyword>
<keyword id="KW-0067">ATP-binding</keyword>
<keyword id="KW-0963">Cytoplasm</keyword>
<keyword id="KW-0436">Ligase</keyword>
<keyword id="KW-0547">Nucleotide-binding</keyword>
<keyword id="KW-0648">Protein biosynthesis</keyword>
<keyword id="KW-0694">RNA-binding</keyword>
<accession>B5XWP0</accession>
<evidence type="ECO:0000255" key="1">
    <source>
        <dbReference type="HAMAP-Rule" id="MF_02006"/>
    </source>
</evidence>
<sequence length="426" mass="47632">MASSNLIKQLQERGLVAQVTDEEALAERLAQGPIALYCGFDPTADSLHLGHLVPLLCLKRFQQAGHKPVALVGGATGLIGDPSFKAAERKLNTEDTVQEWVDKIRKQVAPFLDFDCGDNSAIAANNYDWFGSMNVLTFLRDIGKHFSVNQMINKEAVKQRLNRDDQGISFTEFSYNLLQGYDFACLNKLHGVALQIGGSDQWGNITSGIDLTRRLHQNQVFGLTVPLITKADGTKFGKTEGGAVWLDPKKTSPYKFYQFWINTADADVYRFLKFFTFMDMAEINALEEEDKNSGKAPRAQYVLAEQVTRLVHGEEGLEAAKRITESLFNGNLSDLSESDFEQLAQDGMPMVELEKGTDLMQALVESELQPSRGQARKAIAANGVTVNGIKQPDPDYVLNENDRYFSNYTLLRRGKKNWCLIKWKSK</sequence>
<name>SYY_KLEP3</name>
<feature type="chain" id="PRO_1000189300" description="Tyrosine--tRNA ligase">
    <location>
        <begin position="1"/>
        <end position="426"/>
    </location>
</feature>
<feature type="domain" description="S4 RNA-binding" evidence="1">
    <location>
        <begin position="357"/>
        <end position="415"/>
    </location>
</feature>
<feature type="short sequence motif" description="'HIGH' region">
    <location>
        <begin position="42"/>
        <end position="51"/>
    </location>
</feature>
<feature type="short sequence motif" description="'KMSKS' region">
    <location>
        <begin position="235"/>
        <end position="239"/>
    </location>
</feature>
<feature type="binding site" evidence="1">
    <location>
        <position position="37"/>
    </location>
    <ligand>
        <name>L-tyrosine</name>
        <dbReference type="ChEBI" id="CHEBI:58315"/>
    </ligand>
</feature>
<feature type="binding site" evidence="1">
    <location>
        <position position="175"/>
    </location>
    <ligand>
        <name>L-tyrosine</name>
        <dbReference type="ChEBI" id="CHEBI:58315"/>
    </ligand>
</feature>
<feature type="binding site" evidence="1">
    <location>
        <position position="179"/>
    </location>
    <ligand>
        <name>L-tyrosine</name>
        <dbReference type="ChEBI" id="CHEBI:58315"/>
    </ligand>
</feature>
<feature type="binding site" evidence="1">
    <location>
        <position position="238"/>
    </location>
    <ligand>
        <name>ATP</name>
        <dbReference type="ChEBI" id="CHEBI:30616"/>
    </ligand>
</feature>
<organism>
    <name type="scientific">Klebsiella pneumoniae (strain 342)</name>
    <dbReference type="NCBI Taxonomy" id="507522"/>
    <lineage>
        <taxon>Bacteria</taxon>
        <taxon>Pseudomonadati</taxon>
        <taxon>Pseudomonadota</taxon>
        <taxon>Gammaproteobacteria</taxon>
        <taxon>Enterobacterales</taxon>
        <taxon>Enterobacteriaceae</taxon>
        <taxon>Klebsiella/Raoultella group</taxon>
        <taxon>Klebsiella</taxon>
        <taxon>Klebsiella pneumoniae complex</taxon>
    </lineage>
</organism>
<proteinExistence type="inferred from homology"/>
<comment type="function">
    <text evidence="1">Catalyzes the attachment of tyrosine to tRNA(Tyr) in a two-step reaction: tyrosine is first activated by ATP to form Tyr-AMP and then transferred to the acceptor end of tRNA(Tyr).</text>
</comment>
<comment type="catalytic activity">
    <reaction evidence="1">
        <text>tRNA(Tyr) + L-tyrosine + ATP = L-tyrosyl-tRNA(Tyr) + AMP + diphosphate + H(+)</text>
        <dbReference type="Rhea" id="RHEA:10220"/>
        <dbReference type="Rhea" id="RHEA-COMP:9706"/>
        <dbReference type="Rhea" id="RHEA-COMP:9707"/>
        <dbReference type="ChEBI" id="CHEBI:15378"/>
        <dbReference type="ChEBI" id="CHEBI:30616"/>
        <dbReference type="ChEBI" id="CHEBI:33019"/>
        <dbReference type="ChEBI" id="CHEBI:58315"/>
        <dbReference type="ChEBI" id="CHEBI:78442"/>
        <dbReference type="ChEBI" id="CHEBI:78536"/>
        <dbReference type="ChEBI" id="CHEBI:456215"/>
        <dbReference type="EC" id="6.1.1.1"/>
    </reaction>
</comment>
<comment type="subunit">
    <text evidence="1">Homodimer.</text>
</comment>
<comment type="subcellular location">
    <subcellularLocation>
        <location evidence="1">Cytoplasm</location>
    </subcellularLocation>
</comment>
<comment type="similarity">
    <text evidence="1">Belongs to the class-I aminoacyl-tRNA synthetase family. TyrS type 1 subfamily.</text>
</comment>
<protein>
    <recommendedName>
        <fullName evidence="1">Tyrosine--tRNA ligase</fullName>
        <ecNumber evidence="1">6.1.1.1</ecNumber>
    </recommendedName>
    <alternativeName>
        <fullName evidence="1">Tyrosyl-tRNA synthetase</fullName>
        <shortName evidence="1">TyrRS</shortName>
    </alternativeName>
</protein>
<dbReference type="EC" id="6.1.1.1" evidence="1"/>
<dbReference type="EMBL" id="CP000964">
    <property type="protein sequence ID" value="ACI11739.1"/>
    <property type="molecule type" value="Genomic_DNA"/>
</dbReference>
<dbReference type="SMR" id="B5XWP0"/>
<dbReference type="KEGG" id="kpe:KPK_2373"/>
<dbReference type="HOGENOM" id="CLU_024003_0_3_6"/>
<dbReference type="Proteomes" id="UP000001734">
    <property type="component" value="Chromosome"/>
</dbReference>
<dbReference type="GO" id="GO:0005829">
    <property type="term" value="C:cytosol"/>
    <property type="evidence" value="ECO:0007669"/>
    <property type="project" value="TreeGrafter"/>
</dbReference>
<dbReference type="GO" id="GO:0005524">
    <property type="term" value="F:ATP binding"/>
    <property type="evidence" value="ECO:0007669"/>
    <property type="project" value="UniProtKB-UniRule"/>
</dbReference>
<dbReference type="GO" id="GO:0003723">
    <property type="term" value="F:RNA binding"/>
    <property type="evidence" value="ECO:0007669"/>
    <property type="project" value="UniProtKB-KW"/>
</dbReference>
<dbReference type="GO" id="GO:0004831">
    <property type="term" value="F:tyrosine-tRNA ligase activity"/>
    <property type="evidence" value="ECO:0007669"/>
    <property type="project" value="UniProtKB-UniRule"/>
</dbReference>
<dbReference type="GO" id="GO:0006437">
    <property type="term" value="P:tyrosyl-tRNA aminoacylation"/>
    <property type="evidence" value="ECO:0007669"/>
    <property type="project" value="UniProtKB-UniRule"/>
</dbReference>
<dbReference type="CDD" id="cd00165">
    <property type="entry name" value="S4"/>
    <property type="match status" value="1"/>
</dbReference>
<dbReference type="CDD" id="cd00805">
    <property type="entry name" value="TyrRS_core"/>
    <property type="match status" value="1"/>
</dbReference>
<dbReference type="FunFam" id="1.10.240.10:FF:000001">
    <property type="entry name" value="Tyrosine--tRNA ligase"/>
    <property type="match status" value="1"/>
</dbReference>
<dbReference type="FunFam" id="3.40.50.620:FF:000008">
    <property type="entry name" value="Tyrosine--tRNA ligase"/>
    <property type="match status" value="1"/>
</dbReference>
<dbReference type="Gene3D" id="3.40.50.620">
    <property type="entry name" value="HUPs"/>
    <property type="match status" value="1"/>
</dbReference>
<dbReference type="Gene3D" id="3.10.290.10">
    <property type="entry name" value="RNA-binding S4 domain"/>
    <property type="match status" value="1"/>
</dbReference>
<dbReference type="Gene3D" id="1.10.240.10">
    <property type="entry name" value="Tyrosyl-Transfer RNA Synthetase"/>
    <property type="match status" value="1"/>
</dbReference>
<dbReference type="HAMAP" id="MF_02006">
    <property type="entry name" value="Tyr_tRNA_synth_type1"/>
    <property type="match status" value="1"/>
</dbReference>
<dbReference type="InterPro" id="IPR001412">
    <property type="entry name" value="aa-tRNA-synth_I_CS"/>
</dbReference>
<dbReference type="InterPro" id="IPR002305">
    <property type="entry name" value="aa-tRNA-synth_Ic"/>
</dbReference>
<dbReference type="InterPro" id="IPR014729">
    <property type="entry name" value="Rossmann-like_a/b/a_fold"/>
</dbReference>
<dbReference type="InterPro" id="IPR002942">
    <property type="entry name" value="S4_RNA-bd"/>
</dbReference>
<dbReference type="InterPro" id="IPR036986">
    <property type="entry name" value="S4_RNA-bd_sf"/>
</dbReference>
<dbReference type="InterPro" id="IPR054608">
    <property type="entry name" value="SYY-like_C"/>
</dbReference>
<dbReference type="InterPro" id="IPR002307">
    <property type="entry name" value="Tyr-tRNA-ligase"/>
</dbReference>
<dbReference type="InterPro" id="IPR024088">
    <property type="entry name" value="Tyr-tRNA-ligase_bac-type"/>
</dbReference>
<dbReference type="InterPro" id="IPR024107">
    <property type="entry name" value="Tyr-tRNA-ligase_bac_1"/>
</dbReference>
<dbReference type="NCBIfam" id="TIGR00234">
    <property type="entry name" value="tyrS"/>
    <property type="match status" value="1"/>
</dbReference>
<dbReference type="PANTHER" id="PTHR11766:SF0">
    <property type="entry name" value="TYROSINE--TRNA LIGASE, MITOCHONDRIAL"/>
    <property type="match status" value="1"/>
</dbReference>
<dbReference type="PANTHER" id="PTHR11766">
    <property type="entry name" value="TYROSYL-TRNA SYNTHETASE"/>
    <property type="match status" value="1"/>
</dbReference>
<dbReference type="Pfam" id="PF22421">
    <property type="entry name" value="SYY_C-terminal"/>
    <property type="match status" value="1"/>
</dbReference>
<dbReference type="Pfam" id="PF00579">
    <property type="entry name" value="tRNA-synt_1b"/>
    <property type="match status" value="1"/>
</dbReference>
<dbReference type="PRINTS" id="PR01040">
    <property type="entry name" value="TRNASYNTHTYR"/>
</dbReference>
<dbReference type="SMART" id="SM00363">
    <property type="entry name" value="S4"/>
    <property type="match status" value="1"/>
</dbReference>
<dbReference type="SUPFAM" id="SSF55174">
    <property type="entry name" value="Alpha-L RNA-binding motif"/>
    <property type="match status" value="1"/>
</dbReference>
<dbReference type="SUPFAM" id="SSF52374">
    <property type="entry name" value="Nucleotidylyl transferase"/>
    <property type="match status" value="1"/>
</dbReference>
<dbReference type="PROSITE" id="PS00178">
    <property type="entry name" value="AA_TRNA_LIGASE_I"/>
    <property type="match status" value="1"/>
</dbReference>
<dbReference type="PROSITE" id="PS50889">
    <property type="entry name" value="S4"/>
    <property type="match status" value="1"/>
</dbReference>
<gene>
    <name evidence="1" type="primary">tyrS</name>
    <name type="ordered locus">KPK_2373</name>
</gene>
<reference key="1">
    <citation type="journal article" date="2008" name="PLoS Genet.">
        <title>Complete genome sequence of the N2-fixing broad host range endophyte Klebsiella pneumoniae 342 and virulence predictions verified in mice.</title>
        <authorList>
            <person name="Fouts D.E."/>
            <person name="Tyler H.L."/>
            <person name="DeBoy R.T."/>
            <person name="Daugherty S."/>
            <person name="Ren Q."/>
            <person name="Badger J.H."/>
            <person name="Durkin A.S."/>
            <person name="Huot H."/>
            <person name="Shrivastava S."/>
            <person name="Kothari S."/>
            <person name="Dodson R.J."/>
            <person name="Mohamoud Y."/>
            <person name="Khouri H."/>
            <person name="Roesch L.F.W."/>
            <person name="Krogfelt K.A."/>
            <person name="Struve C."/>
            <person name="Triplett E.W."/>
            <person name="Methe B.A."/>
        </authorList>
    </citation>
    <scope>NUCLEOTIDE SEQUENCE [LARGE SCALE GENOMIC DNA]</scope>
    <source>
        <strain>342</strain>
    </source>
</reference>